<feature type="chain" id="PRO_0000376650" description="2,3,4,5-tetrahydropyridine-2,6-dicarboxylate N-acetyltransferase">
    <location>
        <begin position="1"/>
        <end position="236"/>
    </location>
</feature>
<accession>B1IMX1</accession>
<protein>
    <recommendedName>
        <fullName evidence="1">2,3,4,5-tetrahydropyridine-2,6-dicarboxylate N-acetyltransferase</fullName>
        <ecNumber evidence="1">2.3.1.89</ecNumber>
    </recommendedName>
    <alternativeName>
        <fullName evidence="1">Tetrahydrodipicolinate N-acetyltransferase</fullName>
        <shortName evidence="1">THP acetyltransferase</shortName>
        <shortName evidence="1">Tetrahydropicolinate acetylase</shortName>
    </alternativeName>
</protein>
<comment type="function">
    <text evidence="1">Catalyzes the transfer of an acetyl group from acetyl-CoA to tetrahydrodipicolinate.</text>
</comment>
<comment type="catalytic activity">
    <reaction evidence="1">
        <text>(S)-2,3,4,5-tetrahydrodipicolinate + acetyl-CoA + H2O = L-2-acetamido-6-oxoheptanedioate + CoA</text>
        <dbReference type="Rhea" id="RHEA:13085"/>
        <dbReference type="ChEBI" id="CHEBI:15377"/>
        <dbReference type="ChEBI" id="CHEBI:16845"/>
        <dbReference type="ChEBI" id="CHEBI:57287"/>
        <dbReference type="ChEBI" id="CHEBI:57288"/>
        <dbReference type="ChEBI" id="CHEBI:58117"/>
        <dbReference type="EC" id="2.3.1.89"/>
    </reaction>
</comment>
<comment type="pathway">
    <text evidence="1">Amino-acid biosynthesis; L-lysine biosynthesis via DAP pathway; LL-2,6-diaminopimelate from (S)-tetrahydrodipicolinate (acetylase route): step 1/3.</text>
</comment>
<comment type="similarity">
    <text evidence="1">Belongs to the transferase hexapeptide repeat family. DapH subfamily.</text>
</comment>
<keyword id="KW-0012">Acyltransferase</keyword>
<keyword id="KW-0028">Amino-acid biosynthesis</keyword>
<keyword id="KW-0220">Diaminopimelate biosynthesis</keyword>
<keyword id="KW-0457">Lysine biosynthesis</keyword>
<keyword id="KW-0677">Repeat</keyword>
<keyword id="KW-0808">Transferase</keyword>
<reference key="1">
    <citation type="journal article" date="2007" name="PLoS ONE">
        <title>Analysis of the neurotoxin complex genes in Clostridium botulinum A1-A4 and B1 strains: BoNT/A3, /Ba4 and /B1 clusters are located within plasmids.</title>
        <authorList>
            <person name="Smith T.J."/>
            <person name="Hill K.K."/>
            <person name="Foley B.T."/>
            <person name="Detter J.C."/>
            <person name="Munk A.C."/>
            <person name="Bruce D.C."/>
            <person name="Doggett N.A."/>
            <person name="Smith L.A."/>
            <person name="Marks J.D."/>
            <person name="Xie G."/>
            <person name="Brettin T.S."/>
        </authorList>
    </citation>
    <scope>NUCLEOTIDE SEQUENCE [LARGE SCALE GENOMIC DNA]</scope>
    <source>
        <strain>Okra / Type B1</strain>
    </source>
</reference>
<sequence>MSYNLTDPYEIARYIKEAKKSTPIKAYIEGDLSNCDFTNIEKFNSGDLYILFGESEEILVIIENNKDKIKNCRIEQDRRKSAIPLLDMLKVNARIEPGAIIRDKVLIGENAVIMMGAVINIGAEIGEGTMVDMNAVVGARGKLGKNVHLGAGAVVAGVLEPPSSDPCTIEDNVLIGANAVILEGVKIGKGSVVAAGSIVTTDVPENVVVAGAPAKIIKEVDVKTKDKTKLLDDLRK</sequence>
<evidence type="ECO:0000255" key="1">
    <source>
        <dbReference type="HAMAP-Rule" id="MF_01691"/>
    </source>
</evidence>
<name>DAPH_CLOBK</name>
<proteinExistence type="inferred from homology"/>
<dbReference type="EC" id="2.3.1.89" evidence="1"/>
<dbReference type="EMBL" id="CP000939">
    <property type="protein sequence ID" value="ACA43410.1"/>
    <property type="molecule type" value="Genomic_DNA"/>
</dbReference>
<dbReference type="SMR" id="B1IMX1"/>
<dbReference type="KEGG" id="cbb:CLD_1380"/>
<dbReference type="HOGENOM" id="CLU_103751_0_0_9"/>
<dbReference type="UniPathway" id="UPA00034">
    <property type="reaction ID" value="UER00022"/>
</dbReference>
<dbReference type="Proteomes" id="UP000008541">
    <property type="component" value="Chromosome"/>
</dbReference>
<dbReference type="GO" id="GO:0047200">
    <property type="term" value="F:tetrahydrodipicolinate N-acetyltransferase activity"/>
    <property type="evidence" value="ECO:0007669"/>
    <property type="project" value="UniProtKB-EC"/>
</dbReference>
<dbReference type="GO" id="GO:0019877">
    <property type="term" value="P:diaminopimelate biosynthetic process"/>
    <property type="evidence" value="ECO:0007669"/>
    <property type="project" value="UniProtKB-UniRule"/>
</dbReference>
<dbReference type="GO" id="GO:0009089">
    <property type="term" value="P:lysine biosynthetic process via diaminopimelate"/>
    <property type="evidence" value="ECO:0007669"/>
    <property type="project" value="UniProtKB-UniRule"/>
</dbReference>
<dbReference type="CDD" id="cd03350">
    <property type="entry name" value="LbH_THP_succinylT"/>
    <property type="match status" value="1"/>
</dbReference>
<dbReference type="Gene3D" id="2.160.10.10">
    <property type="entry name" value="Hexapeptide repeat proteins"/>
    <property type="match status" value="1"/>
</dbReference>
<dbReference type="Gene3D" id="3.30.70.250">
    <property type="entry name" value="Malonyl-CoA ACP transacylase, ACP-binding"/>
    <property type="match status" value="1"/>
</dbReference>
<dbReference type="HAMAP" id="MF_01691">
    <property type="entry name" value="DapH"/>
    <property type="match status" value="1"/>
</dbReference>
<dbReference type="InterPro" id="IPR019873">
    <property type="entry name" value="DapH"/>
</dbReference>
<dbReference type="InterPro" id="IPR013710">
    <property type="entry name" value="DapH_N"/>
</dbReference>
<dbReference type="InterPro" id="IPR001451">
    <property type="entry name" value="Hexapep"/>
</dbReference>
<dbReference type="InterPro" id="IPR018357">
    <property type="entry name" value="Hexapep_transf_CS"/>
</dbReference>
<dbReference type="InterPro" id="IPR050179">
    <property type="entry name" value="Trans_hexapeptide_repeat"/>
</dbReference>
<dbReference type="InterPro" id="IPR011004">
    <property type="entry name" value="Trimer_LpxA-like_sf"/>
</dbReference>
<dbReference type="NCBIfam" id="TIGR03532">
    <property type="entry name" value="DapD_Ac"/>
    <property type="match status" value="1"/>
</dbReference>
<dbReference type="PANTHER" id="PTHR43300:SF10">
    <property type="entry name" value="2,3,4,5-TETRAHYDROPYRIDINE-2,6-DICARBOXYLATE N-ACETYLTRANSFERASE"/>
    <property type="match status" value="1"/>
</dbReference>
<dbReference type="PANTHER" id="PTHR43300">
    <property type="entry name" value="ACETYLTRANSFERASE"/>
    <property type="match status" value="1"/>
</dbReference>
<dbReference type="Pfam" id="PF08503">
    <property type="entry name" value="DapH_N"/>
    <property type="match status" value="1"/>
</dbReference>
<dbReference type="Pfam" id="PF14602">
    <property type="entry name" value="Hexapep_2"/>
    <property type="match status" value="1"/>
</dbReference>
<dbReference type="SUPFAM" id="SSF51161">
    <property type="entry name" value="Trimeric LpxA-like enzymes"/>
    <property type="match status" value="1"/>
</dbReference>
<dbReference type="PROSITE" id="PS00101">
    <property type="entry name" value="HEXAPEP_TRANSFERASES"/>
    <property type="match status" value="1"/>
</dbReference>
<gene>
    <name evidence="1" type="primary">dapH</name>
    <name type="ordered locus">CLD_1380</name>
</gene>
<organism>
    <name type="scientific">Clostridium botulinum (strain Okra / Type B1)</name>
    <dbReference type="NCBI Taxonomy" id="498213"/>
    <lineage>
        <taxon>Bacteria</taxon>
        <taxon>Bacillati</taxon>
        <taxon>Bacillota</taxon>
        <taxon>Clostridia</taxon>
        <taxon>Eubacteriales</taxon>
        <taxon>Clostridiaceae</taxon>
        <taxon>Clostridium</taxon>
    </lineage>
</organism>